<sequence>MSSVFEIVNQARRKNKLKRELLDNEKKVRDNRKRVDLLENLLDYIKPEMTHDEIVAIIKNMKADYEDRVDDHIIKSAEISKARRDISRRIRELTEEDKQTSGKK</sequence>
<proteinExistence type="inferred from homology"/>
<evidence type="ECO:0000255" key="1">
    <source>
        <dbReference type="HAMAP-Rule" id="MF_00683"/>
    </source>
</evidence>
<gene>
    <name evidence="1" type="primary">tmaR</name>
    <name type="ordered locus">VIBHAR_05346</name>
</gene>
<reference key="1">
    <citation type="submission" date="2007-08" db="EMBL/GenBank/DDBJ databases">
        <authorList>
            <consortium name="The Vibrio harveyi Genome Sequencing Project"/>
            <person name="Bassler B."/>
            <person name="Clifton S.W."/>
            <person name="Fulton L."/>
            <person name="Delehaunty K."/>
            <person name="Fronick C."/>
            <person name="Harrison M."/>
            <person name="Markivic C."/>
            <person name="Fulton R."/>
            <person name="Tin-Wollam A.-M."/>
            <person name="Shah N."/>
            <person name="Pepin K."/>
            <person name="Nash W."/>
            <person name="Thiruvilangam P."/>
            <person name="Bhonagiri V."/>
            <person name="Waters C."/>
            <person name="Tu K.C."/>
            <person name="Irgon J."/>
            <person name="Wilson R.K."/>
        </authorList>
    </citation>
    <scope>NUCLEOTIDE SEQUENCE [LARGE SCALE GENOMIC DNA]</scope>
    <source>
        <strain>ATCC BAA-1116 / BB120</strain>
    </source>
</reference>
<comment type="function">
    <text evidence="1">Pole-localizer protein involved in the regulation of several cellular processes.</text>
</comment>
<comment type="subcellular location">
    <subcellularLocation>
        <location evidence="1">Cytoplasm</location>
    </subcellularLocation>
</comment>
<comment type="similarity">
    <text evidence="1">Belongs to the pole-localizer TmaR family.</text>
</comment>
<keyword id="KW-0175">Coiled coil</keyword>
<keyword id="KW-0963">Cytoplasm</keyword>
<dbReference type="EMBL" id="CP000790">
    <property type="protein sequence ID" value="ABU73251.1"/>
    <property type="molecule type" value="Genomic_DNA"/>
</dbReference>
<dbReference type="RefSeq" id="WP_005373603.1">
    <property type="nucleotide sequence ID" value="NC_022270.1"/>
</dbReference>
<dbReference type="SMR" id="A7N3Z2"/>
<dbReference type="KEGG" id="vha:VIBHAR_05346"/>
<dbReference type="PATRIC" id="fig|338187.25.peg.4887"/>
<dbReference type="Proteomes" id="UP000008152">
    <property type="component" value="Chromosome II"/>
</dbReference>
<dbReference type="GO" id="GO:0005829">
    <property type="term" value="C:cytosol"/>
    <property type="evidence" value="ECO:0007669"/>
    <property type="project" value="TreeGrafter"/>
</dbReference>
<dbReference type="HAMAP" id="MF_00683">
    <property type="entry name" value="Pole_loc_TmaR"/>
    <property type="match status" value="1"/>
</dbReference>
<dbReference type="InterPro" id="IPR007458">
    <property type="entry name" value="DUF496"/>
</dbReference>
<dbReference type="NCBIfam" id="NF003844">
    <property type="entry name" value="PRK05423.1"/>
    <property type="match status" value="1"/>
</dbReference>
<dbReference type="PANTHER" id="PTHR39591">
    <property type="entry name" value="UPF0265 PROTEIN YEEX"/>
    <property type="match status" value="1"/>
</dbReference>
<dbReference type="PANTHER" id="PTHR39591:SF1">
    <property type="entry name" value="UPF0265 PROTEIN YEEX"/>
    <property type="match status" value="1"/>
</dbReference>
<dbReference type="Pfam" id="PF04363">
    <property type="entry name" value="DUF496"/>
    <property type="match status" value="1"/>
</dbReference>
<dbReference type="PIRSF" id="PIRSF028773">
    <property type="entry name" value="UCP028773"/>
    <property type="match status" value="1"/>
</dbReference>
<name>TMAR_VIBC1</name>
<feature type="chain" id="PRO_1000044938" description="Pole-localizer protein TmaR">
    <location>
        <begin position="1"/>
        <end position="104"/>
    </location>
</feature>
<feature type="coiled-coil region" evidence="1">
    <location>
        <begin position="7"/>
        <end position="34"/>
    </location>
</feature>
<feature type="coiled-coil region" evidence="1">
    <location>
        <begin position="76"/>
        <end position="96"/>
    </location>
</feature>
<organism>
    <name type="scientific">Vibrio campbellii (strain ATCC BAA-1116)</name>
    <dbReference type="NCBI Taxonomy" id="2902295"/>
    <lineage>
        <taxon>Bacteria</taxon>
        <taxon>Pseudomonadati</taxon>
        <taxon>Pseudomonadota</taxon>
        <taxon>Gammaproteobacteria</taxon>
        <taxon>Vibrionales</taxon>
        <taxon>Vibrionaceae</taxon>
        <taxon>Vibrio</taxon>
    </lineage>
</organism>
<accession>A7N3Z2</accession>
<protein>
    <recommendedName>
        <fullName evidence="1">Pole-localizer protein TmaR</fullName>
    </recommendedName>
</protein>